<dbReference type="EMBL" id="CP000679">
    <property type="protein sequence ID" value="ABP67847.1"/>
    <property type="molecule type" value="Genomic_DNA"/>
</dbReference>
<dbReference type="RefSeq" id="WP_011917773.1">
    <property type="nucleotide sequence ID" value="NC_009437.1"/>
</dbReference>
<dbReference type="SMR" id="A4XLR2"/>
<dbReference type="STRING" id="351627.Csac_2269"/>
<dbReference type="KEGG" id="csc:Csac_2269"/>
<dbReference type="eggNOG" id="COG0200">
    <property type="taxonomic scope" value="Bacteria"/>
</dbReference>
<dbReference type="HOGENOM" id="CLU_055188_4_2_9"/>
<dbReference type="OrthoDB" id="9810293at2"/>
<dbReference type="Proteomes" id="UP000000256">
    <property type="component" value="Chromosome"/>
</dbReference>
<dbReference type="GO" id="GO:0022625">
    <property type="term" value="C:cytosolic large ribosomal subunit"/>
    <property type="evidence" value="ECO:0007669"/>
    <property type="project" value="TreeGrafter"/>
</dbReference>
<dbReference type="GO" id="GO:0019843">
    <property type="term" value="F:rRNA binding"/>
    <property type="evidence" value="ECO:0007669"/>
    <property type="project" value="UniProtKB-UniRule"/>
</dbReference>
<dbReference type="GO" id="GO:0003735">
    <property type="term" value="F:structural constituent of ribosome"/>
    <property type="evidence" value="ECO:0007669"/>
    <property type="project" value="InterPro"/>
</dbReference>
<dbReference type="GO" id="GO:0006412">
    <property type="term" value="P:translation"/>
    <property type="evidence" value="ECO:0007669"/>
    <property type="project" value="UniProtKB-UniRule"/>
</dbReference>
<dbReference type="Gene3D" id="3.100.10.10">
    <property type="match status" value="1"/>
</dbReference>
<dbReference type="HAMAP" id="MF_01341">
    <property type="entry name" value="Ribosomal_uL15"/>
    <property type="match status" value="1"/>
</dbReference>
<dbReference type="InterPro" id="IPR030878">
    <property type="entry name" value="Ribosomal_uL15"/>
</dbReference>
<dbReference type="InterPro" id="IPR021131">
    <property type="entry name" value="Ribosomal_uL15/eL18"/>
</dbReference>
<dbReference type="InterPro" id="IPR036227">
    <property type="entry name" value="Ribosomal_uL15/eL18_sf"/>
</dbReference>
<dbReference type="InterPro" id="IPR005749">
    <property type="entry name" value="Ribosomal_uL15_bac-type"/>
</dbReference>
<dbReference type="InterPro" id="IPR001196">
    <property type="entry name" value="Ribosomal_uL15_CS"/>
</dbReference>
<dbReference type="NCBIfam" id="TIGR01071">
    <property type="entry name" value="rplO_bact"/>
    <property type="match status" value="1"/>
</dbReference>
<dbReference type="PANTHER" id="PTHR12934">
    <property type="entry name" value="50S RIBOSOMAL PROTEIN L15"/>
    <property type="match status" value="1"/>
</dbReference>
<dbReference type="PANTHER" id="PTHR12934:SF11">
    <property type="entry name" value="LARGE RIBOSOMAL SUBUNIT PROTEIN UL15M"/>
    <property type="match status" value="1"/>
</dbReference>
<dbReference type="Pfam" id="PF00828">
    <property type="entry name" value="Ribosomal_L27A"/>
    <property type="match status" value="1"/>
</dbReference>
<dbReference type="SUPFAM" id="SSF52080">
    <property type="entry name" value="Ribosomal proteins L15p and L18e"/>
    <property type="match status" value="1"/>
</dbReference>
<dbReference type="PROSITE" id="PS00475">
    <property type="entry name" value="RIBOSOMAL_L15"/>
    <property type="match status" value="1"/>
</dbReference>
<gene>
    <name evidence="1" type="primary">rplO</name>
    <name type="ordered locus">Csac_2269</name>
</gene>
<comment type="function">
    <text evidence="1">Binds to the 23S rRNA.</text>
</comment>
<comment type="subunit">
    <text evidence="1">Part of the 50S ribosomal subunit.</text>
</comment>
<comment type="similarity">
    <text evidence="1">Belongs to the universal ribosomal protein uL15 family.</text>
</comment>
<reference key="1">
    <citation type="submission" date="2007-04" db="EMBL/GenBank/DDBJ databases">
        <title>Genome sequence of the thermophilic hydrogen-producing bacterium Caldicellulosiruptor saccharolyticus DSM 8903.</title>
        <authorList>
            <person name="Copeland A."/>
            <person name="Lucas S."/>
            <person name="Lapidus A."/>
            <person name="Barry K."/>
            <person name="Detter J.C."/>
            <person name="Glavina del Rio T."/>
            <person name="Hammon N."/>
            <person name="Israni S."/>
            <person name="Dalin E."/>
            <person name="Tice H."/>
            <person name="Pitluck S."/>
            <person name="Kiss H."/>
            <person name="Brettin T."/>
            <person name="Bruce D."/>
            <person name="Han C."/>
            <person name="Schmutz J."/>
            <person name="Larimer F."/>
            <person name="Land M."/>
            <person name="Hauser L."/>
            <person name="Kyrpides N."/>
            <person name="Lykidis A."/>
            <person name="van de Werken H.J.G."/>
            <person name="Verhaart M.R.A."/>
            <person name="VanFossen A.L."/>
            <person name="Lewis D.L."/>
            <person name="Nichols J.D."/>
            <person name="Goorissen H.P."/>
            <person name="van Niel E.W.J."/>
            <person name="Stams F.J.M."/>
            <person name="Willquist K.U."/>
            <person name="Ward D.E."/>
            <person name="van der Oost J."/>
            <person name="Kelly R.M."/>
            <person name="Kengen S.M.W."/>
            <person name="Richardson P."/>
        </authorList>
    </citation>
    <scope>NUCLEOTIDE SEQUENCE [LARGE SCALE GENOMIC DNA]</scope>
    <source>
        <strain>ATCC 43494 / DSM 8903 / Tp8T 6331</strain>
    </source>
</reference>
<evidence type="ECO:0000255" key="1">
    <source>
        <dbReference type="HAMAP-Rule" id="MF_01341"/>
    </source>
</evidence>
<evidence type="ECO:0000256" key="2">
    <source>
        <dbReference type="SAM" id="MobiDB-lite"/>
    </source>
</evidence>
<evidence type="ECO:0000305" key="3"/>
<sequence>MKLFELKPAPGAKKRPKRVGRGESSGHGKTSTRGHKGQWARSGGGVRPGFEGGQMPLTRRIPKRGFKNINKKVYTEVNVEKLERFENDTVITPELLLKEGVISKIEKDGVKVLGRGDLTKRLIVRVQKVSEGARKKIEAVGGKVEVI</sequence>
<organism>
    <name type="scientific">Caldicellulosiruptor saccharolyticus (strain ATCC 43494 / DSM 8903 / Tp8T 6331)</name>
    <dbReference type="NCBI Taxonomy" id="351627"/>
    <lineage>
        <taxon>Bacteria</taxon>
        <taxon>Bacillati</taxon>
        <taxon>Bacillota</taxon>
        <taxon>Bacillota incertae sedis</taxon>
        <taxon>Caldicellulosiruptorales</taxon>
        <taxon>Caldicellulosiruptoraceae</taxon>
        <taxon>Caldicellulosiruptor</taxon>
    </lineage>
</organism>
<feature type="chain" id="PRO_1000054443" description="Large ribosomal subunit protein uL15">
    <location>
        <begin position="1"/>
        <end position="147"/>
    </location>
</feature>
<feature type="region of interest" description="Disordered" evidence="2">
    <location>
        <begin position="1"/>
        <end position="58"/>
    </location>
</feature>
<feature type="compositionally biased region" description="Gly residues" evidence="2">
    <location>
        <begin position="42"/>
        <end position="52"/>
    </location>
</feature>
<accession>A4XLR2</accession>
<keyword id="KW-0687">Ribonucleoprotein</keyword>
<keyword id="KW-0689">Ribosomal protein</keyword>
<keyword id="KW-0694">RNA-binding</keyword>
<keyword id="KW-0699">rRNA-binding</keyword>
<protein>
    <recommendedName>
        <fullName evidence="1">Large ribosomal subunit protein uL15</fullName>
    </recommendedName>
    <alternativeName>
        <fullName evidence="3">50S ribosomal protein L15</fullName>
    </alternativeName>
</protein>
<name>RL15_CALS8</name>
<proteinExistence type="inferred from homology"/>